<gene>
    <name type="primary">mepA</name>
    <name type="ordered locus">SAR0331</name>
</gene>
<protein>
    <recommendedName>
        <fullName>Multidrug export protein MepA</fullName>
    </recommendedName>
</protein>
<accession>Q6GJY2</accession>
<reference key="1">
    <citation type="journal article" date="2004" name="Proc. Natl. Acad. Sci. U.S.A.">
        <title>Complete genomes of two clinical Staphylococcus aureus strains: evidence for the rapid evolution of virulence and drug resistance.</title>
        <authorList>
            <person name="Holden M.T.G."/>
            <person name="Feil E.J."/>
            <person name="Lindsay J.A."/>
            <person name="Peacock S.J."/>
            <person name="Day N.P.J."/>
            <person name="Enright M.C."/>
            <person name="Foster T.J."/>
            <person name="Moore C.E."/>
            <person name="Hurst L."/>
            <person name="Atkin R."/>
            <person name="Barron A."/>
            <person name="Bason N."/>
            <person name="Bentley S.D."/>
            <person name="Chillingworth C."/>
            <person name="Chillingworth T."/>
            <person name="Churcher C."/>
            <person name="Clark L."/>
            <person name="Corton C."/>
            <person name="Cronin A."/>
            <person name="Doggett J."/>
            <person name="Dowd L."/>
            <person name="Feltwell T."/>
            <person name="Hance Z."/>
            <person name="Harris B."/>
            <person name="Hauser H."/>
            <person name="Holroyd S."/>
            <person name="Jagels K."/>
            <person name="James K.D."/>
            <person name="Lennard N."/>
            <person name="Line A."/>
            <person name="Mayes R."/>
            <person name="Moule S."/>
            <person name="Mungall K."/>
            <person name="Ormond D."/>
            <person name="Quail M.A."/>
            <person name="Rabbinowitsch E."/>
            <person name="Rutherford K.M."/>
            <person name="Sanders M."/>
            <person name="Sharp S."/>
            <person name="Simmonds M."/>
            <person name="Stevens K."/>
            <person name="Whitehead S."/>
            <person name="Barrell B.G."/>
            <person name="Spratt B.G."/>
            <person name="Parkhill J."/>
        </authorList>
    </citation>
    <scope>NUCLEOTIDE SEQUENCE [LARGE SCALE GENOMIC DNA]</scope>
    <source>
        <strain>MRSA252</strain>
    </source>
</reference>
<proteinExistence type="inferred from homology"/>
<name>MEPA_STAAR</name>
<feature type="chain" id="PRO_0000290229" description="Multidrug export protein MepA">
    <location>
        <begin position="1"/>
        <end position="451"/>
    </location>
</feature>
<feature type="transmembrane region" description="Helical" evidence="2">
    <location>
        <begin position="26"/>
        <end position="46"/>
    </location>
</feature>
<feature type="transmembrane region" description="Helical" evidence="2">
    <location>
        <begin position="54"/>
        <end position="74"/>
    </location>
</feature>
<feature type="transmembrane region" description="Helical" evidence="2">
    <location>
        <begin position="97"/>
        <end position="117"/>
    </location>
</feature>
<feature type="transmembrane region" description="Helical" evidence="2">
    <location>
        <begin position="139"/>
        <end position="159"/>
    </location>
</feature>
<feature type="transmembrane region" description="Helical" evidence="2">
    <location>
        <begin position="170"/>
        <end position="190"/>
    </location>
</feature>
<feature type="transmembrane region" description="Helical" evidence="2">
    <location>
        <begin position="194"/>
        <end position="214"/>
    </location>
</feature>
<feature type="transmembrane region" description="Helical" evidence="2">
    <location>
        <begin position="245"/>
        <end position="265"/>
    </location>
</feature>
<feature type="transmembrane region" description="Helical" evidence="2">
    <location>
        <begin position="282"/>
        <end position="302"/>
    </location>
</feature>
<feature type="transmembrane region" description="Helical" evidence="2">
    <location>
        <begin position="318"/>
        <end position="338"/>
    </location>
</feature>
<feature type="transmembrane region" description="Helical" evidence="2">
    <location>
        <begin position="355"/>
        <end position="375"/>
    </location>
</feature>
<feature type="transmembrane region" description="Helical" evidence="2">
    <location>
        <begin position="397"/>
        <end position="417"/>
    </location>
</feature>
<feature type="transmembrane region" description="Helical" evidence="2">
    <location>
        <begin position="418"/>
        <end position="438"/>
    </location>
</feature>
<organism>
    <name type="scientific">Staphylococcus aureus (strain MRSA252)</name>
    <dbReference type="NCBI Taxonomy" id="282458"/>
    <lineage>
        <taxon>Bacteria</taxon>
        <taxon>Bacillati</taxon>
        <taxon>Bacillota</taxon>
        <taxon>Bacilli</taxon>
        <taxon>Bacillales</taxon>
        <taxon>Staphylococcaceae</taxon>
        <taxon>Staphylococcus</taxon>
    </lineage>
</organism>
<keyword id="KW-0046">Antibiotic resistance</keyword>
<keyword id="KW-1003">Cell membrane</keyword>
<keyword id="KW-0472">Membrane</keyword>
<keyword id="KW-0812">Transmembrane</keyword>
<keyword id="KW-1133">Transmembrane helix</keyword>
<keyword id="KW-0813">Transport</keyword>
<sequence>MKDEQLYYFEKSPVFKAMMHFSLPMMIGTLLSVIYGILNIYFIGFLEDSHMISAISLTLPVFAILMGLGNLFGVGAGTYISRLLGAKDYSKSKFVSSFSIYGGIALGLIVILVALPFSDQIAAILGARGETLALTSNYLKVMFLSAPFVILFFILEQFARAIGAPMISMIGMLASVGLNIILDPILIFGFDLNVVGAALGTAISNVAAALFFIIYFMKNSDVVSVNIKLAKPNKEMLSEIFKIGIPAFLMSILMGFTGLVLNLFLAHYGNFAIASYGISFRLVQFPELIIMGLCEGVVPLIAYNFMSNKGRMKDVIKAVIMSIGVIFVVCMIAVFTIGHHMVGLFTTDQAIVEMATFILKVTMTSLLLNGIGFLFTGMLQATGQGRGATIMAILQGVVIIPVLFIMNALFGLTGVIWSLLIAESLCALAAMLIVYLLRDRLTVDTSELIEG</sequence>
<evidence type="ECO:0000250" key="1"/>
<evidence type="ECO:0000255" key="2"/>
<evidence type="ECO:0000305" key="3"/>
<dbReference type="EMBL" id="BX571856">
    <property type="protein sequence ID" value="CAG39355.1"/>
    <property type="molecule type" value="Genomic_DNA"/>
</dbReference>
<dbReference type="RefSeq" id="WP_000651040.1">
    <property type="nucleotide sequence ID" value="NC_002952.2"/>
</dbReference>
<dbReference type="SMR" id="Q6GJY2"/>
<dbReference type="KEGG" id="sar:SAR0331"/>
<dbReference type="HOGENOM" id="CLU_012893_0_1_9"/>
<dbReference type="Proteomes" id="UP000000596">
    <property type="component" value="Chromosome"/>
</dbReference>
<dbReference type="GO" id="GO:0005886">
    <property type="term" value="C:plasma membrane"/>
    <property type="evidence" value="ECO:0007669"/>
    <property type="project" value="UniProtKB-SubCell"/>
</dbReference>
<dbReference type="GO" id="GO:0015297">
    <property type="term" value="F:antiporter activity"/>
    <property type="evidence" value="ECO:0007669"/>
    <property type="project" value="InterPro"/>
</dbReference>
<dbReference type="GO" id="GO:0042910">
    <property type="term" value="F:xenobiotic transmembrane transporter activity"/>
    <property type="evidence" value="ECO:0007669"/>
    <property type="project" value="InterPro"/>
</dbReference>
<dbReference type="GO" id="GO:0046677">
    <property type="term" value="P:response to antibiotic"/>
    <property type="evidence" value="ECO:0007669"/>
    <property type="project" value="UniProtKB-KW"/>
</dbReference>
<dbReference type="CDD" id="cd13143">
    <property type="entry name" value="MATE_MepA_like"/>
    <property type="match status" value="1"/>
</dbReference>
<dbReference type="InterPro" id="IPR002528">
    <property type="entry name" value="MATE_fam"/>
</dbReference>
<dbReference type="InterPro" id="IPR045070">
    <property type="entry name" value="MATE_MepA-like"/>
</dbReference>
<dbReference type="InterPro" id="IPR051327">
    <property type="entry name" value="MATE_MepA_subfamily"/>
</dbReference>
<dbReference type="InterPro" id="IPR048279">
    <property type="entry name" value="MdtK-like"/>
</dbReference>
<dbReference type="NCBIfam" id="TIGR00797">
    <property type="entry name" value="matE"/>
    <property type="match status" value="1"/>
</dbReference>
<dbReference type="NCBIfam" id="NF000131">
    <property type="entry name" value="MATE_multi_MepA"/>
    <property type="match status" value="1"/>
</dbReference>
<dbReference type="PANTHER" id="PTHR43823:SF3">
    <property type="entry name" value="MULTIDRUG EXPORT PROTEIN MEPA"/>
    <property type="match status" value="1"/>
</dbReference>
<dbReference type="PANTHER" id="PTHR43823">
    <property type="entry name" value="SPORULATION PROTEIN YKVU"/>
    <property type="match status" value="1"/>
</dbReference>
<dbReference type="Pfam" id="PF01554">
    <property type="entry name" value="MatE"/>
    <property type="match status" value="2"/>
</dbReference>
<dbReference type="PIRSF" id="PIRSF006603">
    <property type="entry name" value="DinF"/>
    <property type="match status" value="1"/>
</dbReference>
<comment type="function">
    <text evidence="1">Multidrug resistance efflux protein.</text>
</comment>
<comment type="subcellular location">
    <subcellularLocation>
        <location evidence="3">Cell membrane</location>
        <topology evidence="3">Multi-pass membrane protein</topology>
    </subcellularLocation>
</comment>
<comment type="similarity">
    <text evidence="3">Belongs to the multi antimicrobial extrusion (MATE) (TC 2.A.66.1) family. MepA subfamily.</text>
</comment>